<name>ENGB_ZYMMO</name>
<sequence>MSPENDIRLEAGRKLFAGAVNFLKSAPALEFLPAPTAPEVAFAGRSNVGKSSLINALTNRNSLARASTTPGRTQELNFFDVGEPLQMRLVDMPGYGFAKAPKDVVKRWKWLINDYLRGRAVLRRSLILIDSRHGIKDVDRDLMKMLDDAAISYRVVLTKSDKIKAVELEKTVKAITEEMRKHPAAFPEIIATSSEKGTGIAELRAAVYDAII</sequence>
<evidence type="ECO:0000255" key="1">
    <source>
        <dbReference type="HAMAP-Rule" id="MF_00321"/>
    </source>
</evidence>
<feature type="chain" id="PRO_0000157807" description="GTP-binding protein EngB">
    <location>
        <begin position="1"/>
        <end position="212"/>
    </location>
</feature>
<feature type="domain" description="EngB-type G" evidence="1">
    <location>
        <begin position="36"/>
        <end position="212"/>
    </location>
</feature>
<feature type="binding site" evidence="1">
    <location>
        <begin position="44"/>
        <end position="51"/>
    </location>
    <ligand>
        <name>GTP</name>
        <dbReference type="ChEBI" id="CHEBI:37565"/>
    </ligand>
</feature>
<feature type="binding site" evidence="1">
    <location>
        <position position="51"/>
    </location>
    <ligand>
        <name>Mg(2+)</name>
        <dbReference type="ChEBI" id="CHEBI:18420"/>
    </ligand>
</feature>
<feature type="binding site" evidence="1">
    <location>
        <begin position="71"/>
        <end position="75"/>
    </location>
    <ligand>
        <name>GTP</name>
        <dbReference type="ChEBI" id="CHEBI:37565"/>
    </ligand>
</feature>
<feature type="binding site" evidence="1">
    <location>
        <position position="73"/>
    </location>
    <ligand>
        <name>Mg(2+)</name>
        <dbReference type="ChEBI" id="CHEBI:18420"/>
    </ligand>
</feature>
<feature type="binding site" evidence="1">
    <location>
        <begin position="91"/>
        <end position="94"/>
    </location>
    <ligand>
        <name>GTP</name>
        <dbReference type="ChEBI" id="CHEBI:37565"/>
    </ligand>
</feature>
<feature type="binding site" evidence="1">
    <location>
        <begin position="158"/>
        <end position="161"/>
    </location>
    <ligand>
        <name>GTP</name>
        <dbReference type="ChEBI" id="CHEBI:37565"/>
    </ligand>
</feature>
<feature type="binding site" evidence="1">
    <location>
        <begin position="192"/>
        <end position="194"/>
    </location>
    <ligand>
        <name>GTP</name>
        <dbReference type="ChEBI" id="CHEBI:37565"/>
    </ligand>
</feature>
<dbReference type="EMBL" id="AF180145">
    <property type="protein sequence ID" value="AAD56911.1"/>
    <property type="molecule type" value="Genomic_DNA"/>
</dbReference>
<dbReference type="EMBL" id="AE008692">
    <property type="protein sequence ID" value="AAV90251.1"/>
    <property type="molecule type" value="Genomic_DNA"/>
</dbReference>
<dbReference type="SMR" id="Q9RNL6"/>
<dbReference type="STRING" id="264203.ZMO1627"/>
<dbReference type="KEGG" id="zmo:ZMO1627"/>
<dbReference type="eggNOG" id="COG0218">
    <property type="taxonomic scope" value="Bacteria"/>
</dbReference>
<dbReference type="HOGENOM" id="CLU_033732_2_0_5"/>
<dbReference type="Proteomes" id="UP000001173">
    <property type="component" value="Chromosome"/>
</dbReference>
<dbReference type="GO" id="GO:0005829">
    <property type="term" value="C:cytosol"/>
    <property type="evidence" value="ECO:0007669"/>
    <property type="project" value="TreeGrafter"/>
</dbReference>
<dbReference type="GO" id="GO:0005525">
    <property type="term" value="F:GTP binding"/>
    <property type="evidence" value="ECO:0007669"/>
    <property type="project" value="UniProtKB-UniRule"/>
</dbReference>
<dbReference type="GO" id="GO:0046872">
    <property type="term" value="F:metal ion binding"/>
    <property type="evidence" value="ECO:0007669"/>
    <property type="project" value="UniProtKB-KW"/>
</dbReference>
<dbReference type="GO" id="GO:0000917">
    <property type="term" value="P:division septum assembly"/>
    <property type="evidence" value="ECO:0007669"/>
    <property type="project" value="UniProtKB-KW"/>
</dbReference>
<dbReference type="CDD" id="cd01876">
    <property type="entry name" value="YihA_EngB"/>
    <property type="match status" value="1"/>
</dbReference>
<dbReference type="Gene3D" id="3.40.50.300">
    <property type="entry name" value="P-loop containing nucleotide triphosphate hydrolases"/>
    <property type="match status" value="1"/>
</dbReference>
<dbReference type="HAMAP" id="MF_00321">
    <property type="entry name" value="GTPase_EngB"/>
    <property type="match status" value="1"/>
</dbReference>
<dbReference type="InterPro" id="IPR030393">
    <property type="entry name" value="G_ENGB_dom"/>
</dbReference>
<dbReference type="InterPro" id="IPR006073">
    <property type="entry name" value="GTP-bd"/>
</dbReference>
<dbReference type="InterPro" id="IPR019987">
    <property type="entry name" value="GTP-bd_ribosome_bio_YsxC"/>
</dbReference>
<dbReference type="InterPro" id="IPR027417">
    <property type="entry name" value="P-loop_NTPase"/>
</dbReference>
<dbReference type="NCBIfam" id="TIGR03598">
    <property type="entry name" value="GTPase_YsxC"/>
    <property type="match status" value="1"/>
</dbReference>
<dbReference type="PANTHER" id="PTHR11649:SF13">
    <property type="entry name" value="ENGB-TYPE G DOMAIN-CONTAINING PROTEIN"/>
    <property type="match status" value="1"/>
</dbReference>
<dbReference type="PANTHER" id="PTHR11649">
    <property type="entry name" value="MSS1/TRME-RELATED GTP-BINDING PROTEIN"/>
    <property type="match status" value="1"/>
</dbReference>
<dbReference type="Pfam" id="PF01926">
    <property type="entry name" value="MMR_HSR1"/>
    <property type="match status" value="1"/>
</dbReference>
<dbReference type="SUPFAM" id="SSF52540">
    <property type="entry name" value="P-loop containing nucleoside triphosphate hydrolases"/>
    <property type="match status" value="1"/>
</dbReference>
<dbReference type="PROSITE" id="PS51706">
    <property type="entry name" value="G_ENGB"/>
    <property type="match status" value="1"/>
</dbReference>
<gene>
    <name evidence="1" type="primary">engB</name>
    <name type="synonym">cgpA</name>
    <name type="ordered locus">ZMO1627</name>
</gene>
<reference key="1">
    <citation type="submission" date="1999-08" db="EMBL/GenBank/DDBJ databases">
        <authorList>
            <person name="Lee H.J."/>
            <person name="Kang H.S."/>
        </authorList>
    </citation>
    <scope>NUCLEOTIDE SEQUENCE [GENOMIC DNA]</scope>
    <source>
        <strain>ATCC 31821 / ZM4 / CP4</strain>
    </source>
</reference>
<reference key="2">
    <citation type="journal article" date="2005" name="Nat. Biotechnol.">
        <title>The genome sequence of the ethanologenic bacterium Zymomonas mobilis ZM4.</title>
        <authorList>
            <person name="Seo J.-S."/>
            <person name="Chong H."/>
            <person name="Park H.S."/>
            <person name="Yoon K.-O."/>
            <person name="Jung C."/>
            <person name="Kim J.J."/>
            <person name="Hong J.H."/>
            <person name="Kim H."/>
            <person name="Kim J.-H."/>
            <person name="Kil J.-I."/>
            <person name="Park C.J."/>
            <person name="Oh H.-M."/>
            <person name="Lee J.-S."/>
            <person name="Jin S.-J."/>
            <person name="Um H.-W."/>
            <person name="Lee H.-J."/>
            <person name="Oh S.-J."/>
            <person name="Kim J.Y."/>
            <person name="Kang H.L."/>
            <person name="Lee S.Y."/>
            <person name="Lee K.J."/>
            <person name="Kang H.S."/>
        </authorList>
    </citation>
    <scope>NUCLEOTIDE SEQUENCE [LARGE SCALE GENOMIC DNA]</scope>
    <source>
        <strain>ATCC 31821 / ZM4 / CP4</strain>
    </source>
</reference>
<organism>
    <name type="scientific">Zymomonas mobilis subsp. mobilis (strain ATCC 31821 / ZM4 / CP4)</name>
    <dbReference type="NCBI Taxonomy" id="264203"/>
    <lineage>
        <taxon>Bacteria</taxon>
        <taxon>Pseudomonadati</taxon>
        <taxon>Pseudomonadota</taxon>
        <taxon>Alphaproteobacteria</taxon>
        <taxon>Sphingomonadales</taxon>
        <taxon>Zymomonadaceae</taxon>
        <taxon>Zymomonas</taxon>
    </lineage>
</organism>
<keyword id="KW-0131">Cell cycle</keyword>
<keyword id="KW-0132">Cell division</keyword>
<keyword id="KW-0342">GTP-binding</keyword>
<keyword id="KW-0460">Magnesium</keyword>
<keyword id="KW-0479">Metal-binding</keyword>
<keyword id="KW-0547">Nucleotide-binding</keyword>
<keyword id="KW-1185">Reference proteome</keyword>
<keyword id="KW-0717">Septation</keyword>
<protein>
    <recommendedName>
        <fullName>GTP-binding protein EngB</fullName>
    </recommendedName>
    <alternativeName>
        <fullName>GTP-binding protein CgpA</fullName>
    </alternativeName>
</protein>
<accession>Q9RNL6</accession>
<accession>Q5NM09</accession>
<proteinExistence type="inferred from homology"/>
<comment type="function">
    <text evidence="1">Necessary for normal cell division and for the maintenance of normal septation.</text>
</comment>
<comment type="cofactor">
    <cofactor evidence="1">
        <name>Mg(2+)</name>
        <dbReference type="ChEBI" id="CHEBI:18420"/>
    </cofactor>
</comment>
<comment type="similarity">
    <text evidence="1">Belongs to the TRAFAC class TrmE-Era-EngA-EngB-Septin-like GTPase superfamily. EngB GTPase family.</text>
</comment>